<name>COBD_METTH</name>
<sequence>MSEVSVLLLAVILDLLIGEPPHRLHPVVWMGSAVEWMRNILGNSRISGIILTIAVAAPFTLPLFLINHLQDPLNLIISSILLSAVISIRMLVTSALEVGGSLKEDIEDARRKLSMLVSRDTTSLSDEQITSAAIETLTENITDSVTAPIFYFILLGLPGAFLYRVVNTLDAMVGYLDSENRDIGWFPARLDDILNYIPSRITGVLMVPAALLLGMNWRGSFRILLRDARRTPSPNSGFTMAAAAGALSVQLEKPGVYVLGDPCDGLDNEKLLDAVKLSSLTLILFTLAAAGVMLVIP</sequence>
<comment type="function">
    <text evidence="1">Converts cobyric acid to cobinamide by the addition of aminopropanol on the F carboxylic group.</text>
</comment>
<comment type="pathway">
    <text>Cofactor biosynthesis; adenosylcobalamin biosynthesis.</text>
</comment>
<comment type="subcellular location">
    <subcellularLocation>
        <location evidence="3">Cell membrane</location>
        <topology evidence="3">Multi-pass membrane protein</topology>
    </subcellularLocation>
</comment>
<comment type="similarity">
    <text evidence="3">Belongs to the CobD/CbiB family.</text>
</comment>
<keyword id="KW-1003">Cell membrane</keyword>
<keyword id="KW-0169">Cobalamin biosynthesis</keyword>
<keyword id="KW-0472">Membrane</keyword>
<keyword id="KW-1185">Reference proteome</keyword>
<keyword id="KW-0812">Transmembrane</keyword>
<keyword id="KW-1133">Transmembrane helix</keyword>
<reference key="1">
    <citation type="journal article" date="1997" name="J. Bacteriol.">
        <title>Complete genome sequence of Methanobacterium thermoautotrophicum deltaH: functional analysis and comparative genomics.</title>
        <authorList>
            <person name="Smith D.R."/>
            <person name="Doucette-Stamm L.A."/>
            <person name="Deloughery C."/>
            <person name="Lee H.-M."/>
            <person name="Dubois J."/>
            <person name="Aldredge T."/>
            <person name="Bashirzadeh R."/>
            <person name="Blakely D."/>
            <person name="Cook R."/>
            <person name="Gilbert K."/>
            <person name="Harrison D."/>
            <person name="Hoang L."/>
            <person name="Keagle P."/>
            <person name="Lumm W."/>
            <person name="Pothier B."/>
            <person name="Qiu D."/>
            <person name="Spadafora R."/>
            <person name="Vicare R."/>
            <person name="Wang Y."/>
            <person name="Wierzbowski J."/>
            <person name="Gibson R."/>
            <person name="Jiwani N."/>
            <person name="Caruso A."/>
            <person name="Bush D."/>
            <person name="Safer H."/>
            <person name="Patwell D."/>
            <person name="Prabhakar S."/>
            <person name="McDougall S."/>
            <person name="Shimer G."/>
            <person name="Goyal A."/>
            <person name="Pietrovski S."/>
            <person name="Church G.M."/>
            <person name="Daniels C.J."/>
            <person name="Mao J.-I."/>
            <person name="Rice P."/>
            <person name="Noelling J."/>
            <person name="Reeve J.N."/>
        </authorList>
    </citation>
    <scope>NUCLEOTIDE SEQUENCE [LARGE SCALE GENOMIC DNA]</scope>
    <source>
        <strain>ATCC 29096 / DSM 1053 / JCM 10044 / NBRC 100330 / Delta H</strain>
    </source>
</reference>
<evidence type="ECO:0000250" key="1"/>
<evidence type="ECO:0000255" key="2"/>
<evidence type="ECO:0000305" key="3"/>
<organism>
    <name type="scientific">Methanothermobacter thermautotrophicus (strain ATCC 29096 / DSM 1053 / JCM 10044 / NBRC 100330 / Delta H)</name>
    <name type="common">Methanobacterium thermoautotrophicum</name>
    <dbReference type="NCBI Taxonomy" id="187420"/>
    <lineage>
        <taxon>Archaea</taxon>
        <taxon>Methanobacteriati</taxon>
        <taxon>Methanobacteriota</taxon>
        <taxon>Methanomada group</taxon>
        <taxon>Methanobacteria</taxon>
        <taxon>Methanobacteriales</taxon>
        <taxon>Methanobacteriaceae</taxon>
        <taxon>Methanothermobacter</taxon>
    </lineage>
</organism>
<protein>
    <recommendedName>
        <fullName>Probable cobalamin biosynthesis protein CobD</fullName>
    </recommendedName>
</protein>
<gene>
    <name type="primary">cobD</name>
    <name type="ordered locus">MTH_1409</name>
</gene>
<dbReference type="EMBL" id="AE000666">
    <property type="protein sequence ID" value="AAB85886.1"/>
    <property type="molecule type" value="Genomic_DNA"/>
</dbReference>
<dbReference type="PIR" id="F69054">
    <property type="entry name" value="F69054"/>
</dbReference>
<dbReference type="RefSeq" id="WP_010877021.1">
    <property type="nucleotide sequence ID" value="NC_000916.1"/>
</dbReference>
<dbReference type="FunCoup" id="O27460">
    <property type="interactions" value="90"/>
</dbReference>
<dbReference type="STRING" id="187420.MTH_1409"/>
<dbReference type="PaxDb" id="187420-MTH_1409"/>
<dbReference type="EnsemblBacteria" id="AAB85886">
    <property type="protein sequence ID" value="AAB85886"/>
    <property type="gene ID" value="MTH_1409"/>
</dbReference>
<dbReference type="GeneID" id="1471126"/>
<dbReference type="KEGG" id="mth:MTH_1409"/>
<dbReference type="PATRIC" id="fig|187420.15.peg.1374"/>
<dbReference type="HOGENOM" id="CLU_054212_0_2_2"/>
<dbReference type="InParanoid" id="O27460"/>
<dbReference type="UniPathway" id="UPA00148"/>
<dbReference type="Proteomes" id="UP000005223">
    <property type="component" value="Chromosome"/>
</dbReference>
<dbReference type="GO" id="GO:0005886">
    <property type="term" value="C:plasma membrane"/>
    <property type="evidence" value="ECO:0007669"/>
    <property type="project" value="UniProtKB-SubCell"/>
</dbReference>
<dbReference type="GO" id="GO:0015420">
    <property type="term" value="F:ABC-type vitamin B12 transporter activity"/>
    <property type="evidence" value="ECO:0007669"/>
    <property type="project" value="UniProtKB-UniRule"/>
</dbReference>
<dbReference type="GO" id="GO:0048472">
    <property type="term" value="F:threonine-phosphate decarboxylase activity"/>
    <property type="evidence" value="ECO:0007669"/>
    <property type="project" value="InterPro"/>
</dbReference>
<dbReference type="GO" id="GO:0009236">
    <property type="term" value="P:cobalamin biosynthetic process"/>
    <property type="evidence" value="ECO:0007669"/>
    <property type="project" value="UniProtKB-UniRule"/>
</dbReference>
<dbReference type="HAMAP" id="MF_00024">
    <property type="entry name" value="CobD_CbiB"/>
    <property type="match status" value="1"/>
</dbReference>
<dbReference type="InterPro" id="IPR004485">
    <property type="entry name" value="Cobalamin_biosynth_CobD/CbiB"/>
</dbReference>
<dbReference type="NCBIfam" id="TIGR00380">
    <property type="entry name" value="cobal_cbiB"/>
    <property type="match status" value="1"/>
</dbReference>
<dbReference type="NCBIfam" id="NF002281">
    <property type="entry name" value="PRK01209.2-5"/>
    <property type="match status" value="1"/>
</dbReference>
<dbReference type="PANTHER" id="PTHR34308">
    <property type="entry name" value="COBALAMIN BIOSYNTHESIS PROTEIN CBIB"/>
    <property type="match status" value="1"/>
</dbReference>
<dbReference type="PANTHER" id="PTHR34308:SF1">
    <property type="entry name" value="COBALAMIN BIOSYNTHESIS PROTEIN CBIB"/>
    <property type="match status" value="1"/>
</dbReference>
<dbReference type="Pfam" id="PF03186">
    <property type="entry name" value="CobD_Cbib"/>
    <property type="match status" value="1"/>
</dbReference>
<feature type="chain" id="PRO_0000150942" description="Probable cobalamin biosynthesis protein CobD">
    <location>
        <begin position="1"/>
        <end position="297"/>
    </location>
</feature>
<feature type="transmembrane region" description="Helical" evidence="2">
    <location>
        <begin position="46"/>
        <end position="66"/>
    </location>
</feature>
<feature type="transmembrane region" description="Helical" evidence="2">
    <location>
        <begin position="72"/>
        <end position="92"/>
    </location>
</feature>
<feature type="transmembrane region" description="Helical" evidence="2">
    <location>
        <begin position="141"/>
        <end position="161"/>
    </location>
</feature>
<feature type="transmembrane region" description="Helical" evidence="2">
    <location>
        <begin position="193"/>
        <end position="213"/>
    </location>
</feature>
<feature type="transmembrane region" description="Helical" evidence="2">
    <location>
        <begin position="277"/>
        <end position="297"/>
    </location>
</feature>
<proteinExistence type="inferred from homology"/>
<accession>O27460</accession>